<name>YTH1_DEBHA</name>
<comment type="function">
    <text evidence="1">Component of the cleavage factor I (CF I) involved in pre-mRNA 3'-end processing.</text>
</comment>
<comment type="subcellular location">
    <subcellularLocation>
        <location evidence="1">Nucleus</location>
    </subcellularLocation>
</comment>
<comment type="similarity">
    <text evidence="4">Belongs to the CPSF4/YTH1 family.</text>
</comment>
<protein>
    <recommendedName>
        <fullName>mRNA 3'-end-processing protein YTH1</fullName>
    </recommendedName>
</protein>
<gene>
    <name type="primary">YTH1</name>
    <name type="ordered locus">DEHA2C16126g</name>
</gene>
<reference key="1">
    <citation type="journal article" date="2004" name="Nature">
        <title>Genome evolution in yeasts.</title>
        <authorList>
            <person name="Dujon B."/>
            <person name="Sherman D."/>
            <person name="Fischer G."/>
            <person name="Durrens P."/>
            <person name="Casaregola S."/>
            <person name="Lafontaine I."/>
            <person name="de Montigny J."/>
            <person name="Marck C."/>
            <person name="Neuveglise C."/>
            <person name="Talla E."/>
            <person name="Goffard N."/>
            <person name="Frangeul L."/>
            <person name="Aigle M."/>
            <person name="Anthouard V."/>
            <person name="Babour A."/>
            <person name="Barbe V."/>
            <person name="Barnay S."/>
            <person name="Blanchin S."/>
            <person name="Beckerich J.-M."/>
            <person name="Beyne E."/>
            <person name="Bleykasten C."/>
            <person name="Boisrame A."/>
            <person name="Boyer J."/>
            <person name="Cattolico L."/>
            <person name="Confanioleri F."/>
            <person name="de Daruvar A."/>
            <person name="Despons L."/>
            <person name="Fabre E."/>
            <person name="Fairhead C."/>
            <person name="Ferry-Dumazet H."/>
            <person name="Groppi A."/>
            <person name="Hantraye F."/>
            <person name="Hennequin C."/>
            <person name="Jauniaux N."/>
            <person name="Joyet P."/>
            <person name="Kachouri R."/>
            <person name="Kerrest A."/>
            <person name="Koszul R."/>
            <person name="Lemaire M."/>
            <person name="Lesur I."/>
            <person name="Ma L."/>
            <person name="Muller H."/>
            <person name="Nicaud J.-M."/>
            <person name="Nikolski M."/>
            <person name="Oztas S."/>
            <person name="Ozier-Kalogeropoulos O."/>
            <person name="Pellenz S."/>
            <person name="Potier S."/>
            <person name="Richard G.-F."/>
            <person name="Straub M.-L."/>
            <person name="Suleau A."/>
            <person name="Swennen D."/>
            <person name="Tekaia F."/>
            <person name="Wesolowski-Louvel M."/>
            <person name="Westhof E."/>
            <person name="Wirth B."/>
            <person name="Zeniou-Meyer M."/>
            <person name="Zivanovic Y."/>
            <person name="Bolotin-Fukuhara M."/>
            <person name="Thierry A."/>
            <person name="Bouchier C."/>
            <person name="Caudron B."/>
            <person name="Scarpelli C."/>
            <person name="Gaillardin C."/>
            <person name="Weissenbach J."/>
            <person name="Wincker P."/>
            <person name="Souciet J.-L."/>
        </authorList>
    </citation>
    <scope>NUCLEOTIDE SEQUENCE [LARGE SCALE GENOMIC DNA]</scope>
    <source>
        <strain>ATCC 36239 / CBS 767 / BCRC 21394 / JCM 1990 / NBRC 0083 / IGC 2968</strain>
    </source>
</reference>
<proteinExistence type="inferred from homology"/>
<organism>
    <name type="scientific">Debaryomyces hansenii (strain ATCC 36239 / CBS 767 / BCRC 21394 / JCM 1990 / NBRC 0083 / IGC 2968)</name>
    <name type="common">Yeast</name>
    <name type="synonym">Torulaspora hansenii</name>
    <dbReference type="NCBI Taxonomy" id="284592"/>
    <lineage>
        <taxon>Eukaryota</taxon>
        <taxon>Fungi</taxon>
        <taxon>Dikarya</taxon>
        <taxon>Ascomycota</taxon>
        <taxon>Saccharomycotina</taxon>
        <taxon>Pichiomycetes</taxon>
        <taxon>Debaryomycetaceae</taxon>
        <taxon>Debaryomyces</taxon>
    </lineage>
</organism>
<keyword id="KW-0479">Metal-binding</keyword>
<keyword id="KW-0507">mRNA processing</keyword>
<keyword id="KW-0539">Nucleus</keyword>
<keyword id="KW-1185">Reference proteome</keyword>
<keyword id="KW-0677">Repeat</keyword>
<keyword id="KW-0694">RNA-binding</keyword>
<keyword id="KW-0862">Zinc</keyword>
<keyword id="KW-0863">Zinc-finger</keyword>
<evidence type="ECO:0000250" key="1"/>
<evidence type="ECO:0000255" key="2">
    <source>
        <dbReference type="PROSITE-ProRule" id="PRU00723"/>
    </source>
</evidence>
<evidence type="ECO:0000256" key="3">
    <source>
        <dbReference type="SAM" id="MobiDB-lite"/>
    </source>
</evidence>
<evidence type="ECO:0000305" key="4"/>
<dbReference type="EMBL" id="CR382135">
    <property type="protein sequence ID" value="CAG86470.2"/>
    <property type="molecule type" value="Genomic_DNA"/>
</dbReference>
<dbReference type="RefSeq" id="XP_458388.2">
    <property type="nucleotide sequence ID" value="XM_458388.1"/>
</dbReference>
<dbReference type="SMR" id="Q6BTT1"/>
<dbReference type="FunCoup" id="Q6BTT1">
    <property type="interactions" value="95"/>
</dbReference>
<dbReference type="STRING" id="284592.Q6BTT1"/>
<dbReference type="GeneID" id="2900760"/>
<dbReference type="KEGG" id="dha:DEHA2C16126g"/>
<dbReference type="VEuPathDB" id="FungiDB:DEHA2C16126g"/>
<dbReference type="eggNOG" id="KOG1040">
    <property type="taxonomic scope" value="Eukaryota"/>
</dbReference>
<dbReference type="HOGENOM" id="CLU_024513_1_2_1"/>
<dbReference type="InParanoid" id="Q6BTT1"/>
<dbReference type="OMA" id="SLVCKHY"/>
<dbReference type="OrthoDB" id="1914176at2759"/>
<dbReference type="Proteomes" id="UP000000599">
    <property type="component" value="Chromosome C"/>
</dbReference>
<dbReference type="GO" id="GO:0005829">
    <property type="term" value="C:cytosol"/>
    <property type="evidence" value="ECO:0007669"/>
    <property type="project" value="EnsemblFungi"/>
</dbReference>
<dbReference type="GO" id="GO:0005847">
    <property type="term" value="C:mRNA cleavage and polyadenylation specificity factor complex"/>
    <property type="evidence" value="ECO:0007669"/>
    <property type="project" value="EnsemblFungi"/>
</dbReference>
<dbReference type="GO" id="GO:0003723">
    <property type="term" value="F:RNA binding"/>
    <property type="evidence" value="ECO:0007669"/>
    <property type="project" value="UniProtKB-KW"/>
</dbReference>
<dbReference type="GO" id="GO:0008270">
    <property type="term" value="F:zinc ion binding"/>
    <property type="evidence" value="ECO:0007669"/>
    <property type="project" value="UniProtKB-KW"/>
</dbReference>
<dbReference type="GO" id="GO:0006397">
    <property type="term" value="P:mRNA processing"/>
    <property type="evidence" value="ECO:0007669"/>
    <property type="project" value="UniProtKB-KW"/>
</dbReference>
<dbReference type="FunFam" id="4.10.1000.10:FF:000012">
    <property type="entry name" value="cleavage and polyadenylation specificity factor subunit 4"/>
    <property type="match status" value="1"/>
</dbReference>
<dbReference type="Gene3D" id="3.30.1370.210">
    <property type="match status" value="1"/>
</dbReference>
<dbReference type="Gene3D" id="4.10.1000.10">
    <property type="entry name" value="Zinc finger, CCCH-type"/>
    <property type="match status" value="1"/>
</dbReference>
<dbReference type="InterPro" id="IPR045348">
    <property type="entry name" value="CPSF4/Yth1"/>
</dbReference>
<dbReference type="InterPro" id="IPR000571">
    <property type="entry name" value="Znf_CCCH"/>
</dbReference>
<dbReference type="InterPro" id="IPR036855">
    <property type="entry name" value="Znf_CCCH_sf"/>
</dbReference>
<dbReference type="PANTHER" id="PTHR23102:SF24">
    <property type="entry name" value="CLEAVAGE AND POLYADENYLATION SPECIFICITY FACTOR SUBUNIT 4"/>
    <property type="match status" value="1"/>
</dbReference>
<dbReference type="PANTHER" id="PTHR23102">
    <property type="entry name" value="CLEAVAGE AND POLYADENYLATION SPECIFICITY FACTOR SUBUNIT 4-RELATED"/>
    <property type="match status" value="1"/>
</dbReference>
<dbReference type="Pfam" id="PF14608">
    <property type="entry name" value="zf-CCCH_2"/>
    <property type="match status" value="4"/>
</dbReference>
<dbReference type="SMART" id="SM00356">
    <property type="entry name" value="ZnF_C3H1"/>
    <property type="match status" value="5"/>
</dbReference>
<dbReference type="SUPFAM" id="SSF90229">
    <property type="entry name" value="CCCH zinc finger"/>
    <property type="match status" value="2"/>
</dbReference>
<dbReference type="PROSITE" id="PS50103">
    <property type="entry name" value="ZF_C3H1"/>
    <property type="match status" value="5"/>
</dbReference>
<accession>Q6BTT1</accession>
<sequence length="223" mass="25709">MLQLNQVIHPDTRNKRFKFEPFLLKEYNFGLDPDRPVCQFYNPSNPNNSCPNGSLCPHKHVSSMYSNKIVCKHWLRGLCKKNDHCEFLHEYNLRKMPECLFYSKNGFCTQTPECLYLHVDPQSKIPPCSSYEKGFCPDGPKCANRHIRKIMCPLWLTGFCPKGAECDYTHPRFEAIIDRLRIKPDEDAVEEKEKVANGSDKEDQNMADATSNGNTEEKDESGP</sequence>
<feature type="chain" id="PRO_0000238537" description="mRNA 3'-end-processing protein YTH1">
    <location>
        <begin position="1"/>
        <end position="223"/>
    </location>
</feature>
<feature type="zinc finger region" description="C3H1-type 1" evidence="2">
    <location>
        <begin position="32"/>
        <end position="63"/>
    </location>
</feature>
<feature type="zinc finger region" description="C3H1-type 2" evidence="2">
    <location>
        <begin position="65"/>
        <end position="92"/>
    </location>
</feature>
<feature type="zinc finger region" description="C3H1-type 3" evidence="2">
    <location>
        <begin position="93"/>
        <end position="121"/>
    </location>
</feature>
<feature type="zinc finger region" description="C3H1-type 4" evidence="2">
    <location>
        <begin position="122"/>
        <end position="149"/>
    </location>
</feature>
<feature type="zinc finger region" description="C3H1-type 5" evidence="2">
    <location>
        <begin position="151"/>
        <end position="173"/>
    </location>
</feature>
<feature type="region of interest" description="Disordered" evidence="3">
    <location>
        <begin position="184"/>
        <end position="223"/>
    </location>
</feature>
<feature type="compositionally biased region" description="Basic and acidic residues" evidence="3">
    <location>
        <begin position="184"/>
        <end position="204"/>
    </location>
</feature>